<proteinExistence type="inferred from homology"/>
<feature type="chain" id="PRO_0000330282" description="rRNA-processing protein EFG1">
    <location>
        <begin position="1"/>
        <end position="341"/>
    </location>
</feature>
<feature type="region of interest" description="Disordered" evidence="3">
    <location>
        <begin position="1"/>
        <end position="115"/>
    </location>
</feature>
<feature type="region of interest" description="Disordered" evidence="3">
    <location>
        <begin position="151"/>
        <end position="178"/>
    </location>
</feature>
<feature type="region of interest" description="Disordered" evidence="3">
    <location>
        <begin position="257"/>
        <end position="341"/>
    </location>
</feature>
<feature type="coiled-coil region" evidence="2">
    <location>
        <begin position="90"/>
        <end position="155"/>
    </location>
</feature>
<feature type="compositionally biased region" description="Polar residues" evidence="3">
    <location>
        <begin position="32"/>
        <end position="45"/>
    </location>
</feature>
<feature type="compositionally biased region" description="Low complexity" evidence="3">
    <location>
        <begin position="58"/>
        <end position="69"/>
    </location>
</feature>
<feature type="compositionally biased region" description="Basic and acidic residues" evidence="3">
    <location>
        <begin position="93"/>
        <end position="115"/>
    </location>
</feature>
<feature type="compositionally biased region" description="Acidic residues" evidence="3">
    <location>
        <begin position="156"/>
        <end position="169"/>
    </location>
</feature>
<feature type="compositionally biased region" description="Low complexity" evidence="3">
    <location>
        <begin position="270"/>
        <end position="284"/>
    </location>
</feature>
<feature type="compositionally biased region" description="Basic and acidic residues" evidence="3">
    <location>
        <begin position="294"/>
        <end position="308"/>
    </location>
</feature>
<feature type="compositionally biased region" description="Acidic residues" evidence="3">
    <location>
        <begin position="309"/>
        <end position="321"/>
    </location>
</feature>
<accession>Q4PFU7</accession>
<accession>A0A0D1E9P7</accession>
<gene>
    <name type="primary">EFG1</name>
    <name type="ORF">UMAG_01016</name>
</gene>
<reference key="1">
    <citation type="journal article" date="2006" name="Nature">
        <title>Insights from the genome of the biotrophic fungal plant pathogen Ustilago maydis.</title>
        <authorList>
            <person name="Kaemper J."/>
            <person name="Kahmann R."/>
            <person name="Boelker M."/>
            <person name="Ma L.-J."/>
            <person name="Brefort T."/>
            <person name="Saville B.J."/>
            <person name="Banuett F."/>
            <person name="Kronstad J.W."/>
            <person name="Gold S.E."/>
            <person name="Mueller O."/>
            <person name="Perlin M.H."/>
            <person name="Woesten H.A.B."/>
            <person name="de Vries R."/>
            <person name="Ruiz-Herrera J."/>
            <person name="Reynaga-Pena C.G."/>
            <person name="Snetselaar K."/>
            <person name="McCann M."/>
            <person name="Perez-Martin J."/>
            <person name="Feldbruegge M."/>
            <person name="Basse C.W."/>
            <person name="Steinberg G."/>
            <person name="Ibeas J.I."/>
            <person name="Holloman W."/>
            <person name="Guzman P."/>
            <person name="Farman M.L."/>
            <person name="Stajich J.E."/>
            <person name="Sentandreu R."/>
            <person name="Gonzalez-Prieto J.M."/>
            <person name="Kennell J.C."/>
            <person name="Molina L."/>
            <person name="Schirawski J."/>
            <person name="Mendoza-Mendoza A."/>
            <person name="Greilinger D."/>
            <person name="Muench K."/>
            <person name="Roessel N."/>
            <person name="Scherer M."/>
            <person name="Vranes M."/>
            <person name="Ladendorf O."/>
            <person name="Vincon V."/>
            <person name="Fuchs U."/>
            <person name="Sandrock B."/>
            <person name="Meng S."/>
            <person name="Ho E.C.H."/>
            <person name="Cahill M.J."/>
            <person name="Boyce K.J."/>
            <person name="Klose J."/>
            <person name="Klosterman S.J."/>
            <person name="Deelstra H.J."/>
            <person name="Ortiz-Castellanos L."/>
            <person name="Li W."/>
            <person name="Sanchez-Alonso P."/>
            <person name="Schreier P.H."/>
            <person name="Haeuser-Hahn I."/>
            <person name="Vaupel M."/>
            <person name="Koopmann E."/>
            <person name="Friedrich G."/>
            <person name="Voss H."/>
            <person name="Schlueter T."/>
            <person name="Margolis J."/>
            <person name="Platt D."/>
            <person name="Swimmer C."/>
            <person name="Gnirke A."/>
            <person name="Chen F."/>
            <person name="Vysotskaia V."/>
            <person name="Mannhaupt G."/>
            <person name="Gueldener U."/>
            <person name="Muensterkoetter M."/>
            <person name="Haase D."/>
            <person name="Oesterheld M."/>
            <person name="Mewes H.-W."/>
            <person name="Mauceli E.W."/>
            <person name="DeCaprio D."/>
            <person name="Wade C.M."/>
            <person name="Butler J."/>
            <person name="Young S.K."/>
            <person name="Jaffe D.B."/>
            <person name="Calvo S.E."/>
            <person name="Nusbaum C."/>
            <person name="Galagan J.E."/>
            <person name="Birren B.W."/>
        </authorList>
    </citation>
    <scope>NUCLEOTIDE SEQUENCE [LARGE SCALE GENOMIC DNA]</scope>
    <source>
        <strain>DSM 14603 / FGSC 9021 / UM521</strain>
    </source>
</reference>
<reference key="2">
    <citation type="submission" date="2014-09" db="EMBL/GenBank/DDBJ databases">
        <authorList>
            <person name="Gueldener U."/>
            <person name="Muensterkoetter M."/>
            <person name="Walter M.C."/>
            <person name="Mannhaupt G."/>
            <person name="Kahmann R."/>
        </authorList>
    </citation>
    <scope>GENOME REANNOTATION</scope>
    <source>
        <strain>DSM 14603 / FGSC 9021 / UM521</strain>
    </source>
</reference>
<comment type="function">
    <text evidence="1">Involved in rRNA processing.</text>
</comment>
<comment type="subcellular location">
    <subcellularLocation>
        <location evidence="1">Nucleus</location>
        <location evidence="1">Nucleolus</location>
    </subcellularLocation>
</comment>
<comment type="similarity">
    <text evidence="4">Belongs to the EFG1 family.</text>
</comment>
<evidence type="ECO:0000250" key="1"/>
<evidence type="ECO:0000255" key="2"/>
<evidence type="ECO:0000256" key="3">
    <source>
        <dbReference type="SAM" id="MobiDB-lite"/>
    </source>
</evidence>
<evidence type="ECO:0000305" key="4"/>
<dbReference type="EMBL" id="CM003141">
    <property type="protein sequence ID" value="KIS71105.1"/>
    <property type="molecule type" value="Genomic_DNA"/>
</dbReference>
<dbReference type="RefSeq" id="XP_011386995.1">
    <property type="nucleotide sequence ID" value="XM_011388693.1"/>
</dbReference>
<dbReference type="SMR" id="Q4PFU7"/>
<dbReference type="FunCoup" id="Q4PFU7">
    <property type="interactions" value="34"/>
</dbReference>
<dbReference type="STRING" id="237631.Q4PFU7"/>
<dbReference type="EnsemblFungi" id="KIS71105">
    <property type="protein sequence ID" value="KIS71105"/>
    <property type="gene ID" value="UMAG_01016"/>
</dbReference>
<dbReference type="GeneID" id="23562151"/>
<dbReference type="KEGG" id="uma:UMAG_01016"/>
<dbReference type="VEuPathDB" id="FungiDB:UMAG_01016"/>
<dbReference type="eggNOG" id="KOG4484">
    <property type="taxonomic scope" value="Eukaryota"/>
</dbReference>
<dbReference type="HOGENOM" id="CLU_066912_2_1_1"/>
<dbReference type="InParanoid" id="Q4PFU7"/>
<dbReference type="OMA" id="KCMEEGT"/>
<dbReference type="OrthoDB" id="47732at2759"/>
<dbReference type="Proteomes" id="UP000000561">
    <property type="component" value="Chromosome 2"/>
</dbReference>
<dbReference type="GO" id="GO:0005730">
    <property type="term" value="C:nucleolus"/>
    <property type="evidence" value="ECO:0007669"/>
    <property type="project" value="UniProtKB-SubCell"/>
</dbReference>
<dbReference type="GO" id="GO:0000462">
    <property type="term" value="P:maturation of SSU-rRNA from tricistronic rRNA transcript (SSU-rRNA, 5.8S rRNA, LSU-rRNA)"/>
    <property type="evidence" value="ECO:0000318"/>
    <property type="project" value="GO_Central"/>
</dbReference>
<dbReference type="InterPro" id="IPR019310">
    <property type="entry name" value="Efg1"/>
</dbReference>
<dbReference type="InterPro" id="IPR050786">
    <property type="entry name" value="EFG1_rRNA-proc"/>
</dbReference>
<dbReference type="PANTHER" id="PTHR33911">
    <property type="entry name" value="RRNA-PROCESSING PROTEIN EFG1"/>
    <property type="match status" value="1"/>
</dbReference>
<dbReference type="PANTHER" id="PTHR33911:SF1">
    <property type="entry name" value="RRNA-PROCESSING PROTEIN EFG1"/>
    <property type="match status" value="1"/>
</dbReference>
<dbReference type="Pfam" id="PF10153">
    <property type="entry name" value="Efg1"/>
    <property type="match status" value="1"/>
</dbReference>
<organism>
    <name type="scientific">Mycosarcoma maydis</name>
    <name type="common">Corn smut fungus</name>
    <name type="synonym">Ustilago maydis</name>
    <dbReference type="NCBI Taxonomy" id="5270"/>
    <lineage>
        <taxon>Eukaryota</taxon>
        <taxon>Fungi</taxon>
        <taxon>Dikarya</taxon>
        <taxon>Basidiomycota</taxon>
        <taxon>Ustilaginomycotina</taxon>
        <taxon>Ustilaginomycetes</taxon>
        <taxon>Ustilaginales</taxon>
        <taxon>Ustilaginaceae</taxon>
        <taxon>Mycosarcoma</taxon>
    </lineage>
</organism>
<name>EFG1P_MYCMD</name>
<keyword id="KW-0175">Coiled coil</keyword>
<keyword id="KW-0539">Nucleus</keyword>
<keyword id="KW-1185">Reference proteome</keyword>
<keyword id="KW-0698">rRNA processing</keyword>
<protein>
    <recommendedName>
        <fullName>rRNA-processing protein EFG1</fullName>
    </recommendedName>
</protein>
<sequence>MPKESKGKSAVRGESSIDSPSRTGAKPYNKRSAPTTSNGPSSKSQHTSKKPRFEKPNPSGSSSSLPGASKIKASIRQTKRLLAKPNLAPGTKIEAERRLKSLESDLEVASRKQVEKSRASRYHRVKFVERQKLVRRIARCKRNLARLNSDKAAQDLDSEGEASDDDDEGYGNQRLKESKMSKEELTKMLRWLRELLQYVMQYPADLRYVALFPTAEEGPSPPDAKEKDKSRQMAYQHLERVKKAIDDGQISEEVEVELSSKHRTLKKLATSTGGSSNGTTPTTSQAKNKQKMAKKTDKTTKNKRKNEEPISDDDDESDEDAAGAGGVKGDDFFAQDSDDEE</sequence>